<protein>
    <recommendedName>
        <fullName evidence="9">2'-hydroxybiphenyl-2-sulfinate desulfinase</fullName>
        <ecNumber evidence="8">3.13.1.3</ecNumber>
    </recommendedName>
    <alternativeName>
        <fullName evidence="12">2-(2-hydroxyphenyl)benzenesulfinate desulfinase</fullName>
        <shortName evidence="12">HPBS desulfinase</shortName>
    </alternativeName>
    <alternativeName>
        <fullName evidence="13">Dibenzothiophene desulfurization enzyme B</fullName>
    </alternativeName>
</protein>
<proteinExistence type="evidence at protein level"/>
<reference key="1">
    <citation type="journal article" date="1994" name="J. Bacteriol.">
        <title>Characterization of the desulfurization genes from Rhodococcus sp. strain IGTS8.</title>
        <authorList>
            <person name="Denome S.A."/>
            <person name="Oldfield C."/>
            <person name="Nash L.J."/>
            <person name="Young K.D."/>
        </authorList>
    </citation>
    <scope>NUCLEOTIDE SEQUENCE [GENOMIC DNA]</scope>
    <scope>PATHWAY</scope>
    <scope>PROBABLE OPERON STRUCTURE</scope>
    <scope>DISRUPTION PHENOTYPE</scope>
    <scope>BIOTECHNOLOGY</scope>
    <source>
        <strain>ATCC 53968 / IGTS8</strain>
        <plasmid>pSox</plasmid>
    </source>
</reference>
<reference key="2">
    <citation type="journal article" date="1995" name="Appl. Environ. Microbiol.">
        <title>Sequence and molecular characterization of a DNA region encoding the dibenzothiophene desulfurization operon of Rhodococcus sp. strain IGTS8.</title>
        <authorList>
            <person name="Piddington C.S."/>
            <person name="Kovacevich B.R."/>
            <person name="Rambosek J."/>
        </authorList>
    </citation>
    <scope>NUCLEOTIDE SEQUENCE [GENOMIC DNA]</scope>
    <scope>FUNCTION</scope>
    <scope>PATHWAY</scope>
    <scope>INDUCTION</scope>
    <scope>PROBABLE OPERON STRUCTURE</scope>
    <scope>BIOTECHNOLOGY</scope>
    <source>
        <strain>ATCC 53968 / IGTS8</strain>
    </source>
</reference>
<reference key="3">
    <citation type="journal article" date="1996" name="J. Bacteriol.">
        <title>Genetic analysis of the dsz promoter and associated regulatory regions of Rhodococcus erythropolis IGTS8.</title>
        <authorList>
            <person name="Li M.Z."/>
            <person name="Squires C.H."/>
            <person name="Monticello D.J."/>
            <person name="Childs J.D."/>
        </authorList>
    </citation>
    <scope>INDUCTION</scope>
    <source>
        <strain>ATCC 53968 / IGTS8</strain>
    </source>
</reference>
<reference key="4">
    <citation type="journal article" date="1996" name="Nat. Biotechnol.">
        <title>Molecular mechanisms of biocatalytic desulfurization of fossil fuels.</title>
        <authorList>
            <person name="Gray K.A."/>
            <person name="Pogrebinsky O.S."/>
            <person name="Mrachko G.T."/>
            <person name="Xi L."/>
            <person name="Monticello D.J."/>
            <person name="Squires C.H."/>
        </authorList>
    </citation>
    <scope>FUNCTION</scope>
    <scope>CATALYTIC ACTIVITY</scope>
    <scope>BIOPHYSICOCHEMICAL PROPERTIES</scope>
    <scope>PATHWAY</scope>
    <scope>SUBUNIT</scope>
    <source>
        <strain>ATCC 53968 / IGTS8</strain>
    </source>
</reference>
<reference key="5">
    <citation type="journal article" date="1997" name="Microbiology">
        <title>Elucidation of the metabolic pathway for dibenzothiophene desulphurization by Rhodococcus sp. strain IGTS8 (ATCC 53968).</title>
        <authorList>
            <person name="Oldfield C."/>
            <person name="Pogrebinsky O."/>
            <person name="Simmonds J."/>
            <person name="Olson E.S."/>
            <person name="Kulpa C.F."/>
        </authorList>
    </citation>
    <scope>FUNCTION</scope>
    <scope>PATHWAY</scope>
    <scope>SUBCELLULAR LOCATION</scope>
    <scope>BIOTECHNOLOGY</scope>
    <source>
        <strain>ATCC 53968 / IGTS8</strain>
    </source>
</reference>
<reference key="6">
    <citation type="journal article" date="2002" name="Appl. Environ. Microbiol.">
        <title>Chemostat approach for the directed evolution of biodesulfurization gain-of-function mutants.</title>
        <authorList>
            <person name="Arensdorf J.J."/>
            <person name="Loomis A.K."/>
            <person name="DiGrazia P.M."/>
            <person name="Monticello D.J."/>
            <person name="Pienkos P.T."/>
        </authorList>
    </citation>
    <scope>FUNCTION</scope>
    <scope>PATHWAY</scope>
    <scope>BIOTECHNOLOGY</scope>
    <source>
        <strain>ATCC 53968 / IGTS8</strain>
    </source>
</reference>
<reference key="7">
    <citation type="journal article" date="2019" name="J. Phys. Chem. B">
        <title>Inhibition Mechanisms of Rhodococcus Erythropolis 2'-Hydroxybiphenyl-2-sulfinate Desulfinase (DszB).</title>
        <authorList>
            <person name="Yu Y."/>
            <person name="Mills L.C."/>
            <person name="Englert D.L."/>
            <person name="Payne C.M."/>
        </authorList>
    </citation>
    <scope>FUNCTION</scope>
    <scope>CATALYTIC ACTIVITY</scope>
    <scope>ACTIVITY REGULATION</scope>
    <scope>BIOPHYSICOCHEMICAL PROPERTIES</scope>
    <source>
        <strain>ATCC 53968 / IGTS8</strain>
    </source>
</reference>
<reference evidence="19 20 21" key="8">
    <citation type="journal article" date="2006" name="J. Biol. Chem.">
        <title>Crystal structure and desulfurization mechanism of 2'-hydroxybiphenyl-2-sulfinic acid desulfinase.</title>
        <authorList>
            <person name="Lee W.C."/>
            <person name="Ohshiro T."/>
            <person name="Matsubara T."/>
            <person name="Izumi Y."/>
            <person name="Tanokura M."/>
        </authorList>
    </citation>
    <scope>X-RAY CRYSTALLOGRAPHY (1.60 ANGSTROMS) ALONE AND IN COMPLEX WITH SUBSTRATE</scope>
    <scope>SUBUNIT</scope>
    <scope>ACTIVE SITES</scope>
    <scope>DOMAIN</scope>
    <scope>MUTAGENESIS OF CYS-27; HIS-60; ARG-70 AND GLU-192</scope>
    <source>
        <strain>ATCC 53968 / IGTS8</strain>
    </source>
</reference>
<gene>
    <name evidence="10" type="primary">dszB</name>
    <name evidence="11" type="synonym">soxB</name>
</gene>
<comment type="function">
    <text evidence="1 3 4 5 7 8">Catalyzes the third and final step of the '4S' desulfurization pathway that removes covalently bound sulfur from dibenzothiophene (DBT) without breaking carbon-carbon bonds. Oxidizes 2-(2'-hydroxyphenyl)benzene sulphinate (HBPS) to 2-hydroxybiphenyl (HBP) plus sulfite (PubMed:31545606, PubMed:7574582, PubMed:7961424, PubMed:9308179, PubMed:9634856). The rate-limiting step of the '4S' desulfurization pathway (PubMed:31545606, PubMed:9308179). The pathway substrate specificity has been augmented using mutagenesis, however no mutations allowed use of alkylated thiophenes (PubMed:11823208).</text>
</comment>
<comment type="catalytic activity">
    <reaction evidence="3 8">
        <text>2'-hydroxybiphenyl-2-sulfinate + H2O = biphenyl-2-ol + sulfite + H(+)</text>
        <dbReference type="Rhea" id="RHEA:12945"/>
        <dbReference type="ChEBI" id="CHEBI:15377"/>
        <dbReference type="ChEBI" id="CHEBI:15378"/>
        <dbReference type="ChEBI" id="CHEBI:17043"/>
        <dbReference type="ChEBI" id="CHEBI:17359"/>
        <dbReference type="ChEBI" id="CHEBI:18218"/>
        <dbReference type="EC" id="3.13.1.3"/>
    </reaction>
</comment>
<comment type="activity regulation">
    <text evidence="3">Inhibited by the end product HBP.</text>
</comment>
<comment type="biophysicochemical properties">
    <kinetics>
        <KM evidence="3">3.5 uM for HBPS</KM>
        <text evidence="8">kcat is 2 min(-1).</text>
    </kinetics>
</comment>
<comment type="pathway">
    <text evidence="1 4 5 8">Sulfur metabolism; dibenzothiophene degradation.</text>
</comment>
<comment type="subunit">
    <text evidence="2 8">Monomer.</text>
</comment>
<comment type="subcellular location">
    <subcellularLocation>
        <location evidence="18">Cytoplasm</location>
    </subcellularLocation>
</comment>
<comment type="induction">
    <text evidence="4 6 15 16 17">Expressed during growth on DBT or DMSO as sole sulfur source; this protein accumulates to lower levels than DszA or DszC (at protein level) (PubMed:8932295). Part of the probable dszA-dszB-dszC operon (Probable). Desulfurization is repressed by sulfate, cysteine and methionine (PubMed:7574582, PubMed:8932295).</text>
</comment>
<comment type="domain">
    <text evidence="2">Has 2 domains; domain A (residues 1-97 and 252-365) and domain B (residues 98-251). The active site with bound substrates is found between them. Upon substrate binding His-60 moves into the active site.</text>
</comment>
<comment type="disruption phenotype">
    <text evidence="5">Blocks the desulfurization of DBT to 2-HBP, accumulates an unknown intermediate that is not DBTO2.</text>
</comment>
<comment type="biotechnology">
    <text evidence="1 4 5 7">Can be used to remove sulfur from polycyclic aromatic sulfur compounds found in gasoline and diesel (biodesulfurization), which are a considerable source of pollution. In addition it may be possible to engineer the operon to make specialty chemicals.</text>
</comment>
<comment type="similarity">
    <text evidence="13">Belongs to the DszB desulfinase family.</text>
</comment>
<sequence>MTSRVDPANPGSELDSAIRDTLTYSNCPVPNALLTASESGFLDAAGIELDVLSGQQGTVHFTYDQPAYTRFGGEIPPLLSEGLRAPGRTRLLGITPLLGRQGFFVRDDSPITAAADLAGRRIGVSASAIRILRGQLGDYLELDPWRQTLVALGSWEARALLHTLEHGELGVDDVELVPISSPGVDVPAEQLEESATVKGADLFPDVARGQAAVLASGDVDALYSWLPWAGELQATGARPVVDLGLDERNAYASVWTVSSGLVRQRPGLVQRLVDAAVDAGLWARDHSDAVTSLHAANLGVSTGAVGQGFGADFQQRLVPRLDHDALALLERTQQFLLTNNLLQEPVALDQWAAPEFLNNSLNRHR</sequence>
<keyword id="KW-0002">3D-structure</keyword>
<keyword id="KW-0963">Cytoplasm</keyword>
<keyword id="KW-0378">Hydrolase</keyword>
<keyword id="KW-0503">Monooxygenase</keyword>
<keyword id="KW-0560">Oxidoreductase</keyword>
<keyword id="KW-0614">Plasmid</keyword>
<name>DSZB_RHOSG</name>
<feature type="chain" id="PRO_0000072047" description="2'-hydroxybiphenyl-2-sulfinate desulfinase">
    <location>
        <begin position="1"/>
        <end position="365"/>
    </location>
</feature>
<feature type="active site" evidence="14">
    <location>
        <position position="27"/>
    </location>
</feature>
<feature type="active site" evidence="14">
    <location>
        <position position="70"/>
    </location>
</feature>
<feature type="binding site" evidence="2 20 21">
    <location>
        <position position="27"/>
    </location>
    <ligand>
        <name>2'-hydroxybiphenyl-2-sulfinate</name>
        <dbReference type="ChEBI" id="CHEBI:18218"/>
    </ligand>
</feature>
<feature type="binding site" evidence="2 20 21">
    <location>
        <position position="60"/>
    </location>
    <ligand>
        <name>2'-hydroxybiphenyl-2-sulfinate</name>
        <dbReference type="ChEBI" id="CHEBI:18218"/>
    </ligand>
</feature>
<feature type="binding site" evidence="2 20 21">
    <location>
        <position position="70"/>
    </location>
    <ligand>
        <name>2'-hydroxybiphenyl-2-sulfinate</name>
        <dbReference type="ChEBI" id="CHEBI:18218"/>
    </ligand>
</feature>
<feature type="site" description="May orient the sulfinate group" evidence="14">
    <location>
        <position position="60"/>
    </location>
</feature>
<feature type="mutagenesis site" description="Loss of desulfination activity." evidence="2">
    <original>C</original>
    <variation>S</variation>
    <location>
        <position position="27"/>
    </location>
</feature>
<feature type="mutagenesis site" description="About 17-fold decrease in desulfination activity." evidence="2">
    <original>H</original>
    <variation>Q</variation>
    <location>
        <position position="60"/>
    </location>
</feature>
<feature type="mutagenesis site" description="Loss of desulfination activity, protein found in insoluble cell extract." evidence="2">
    <original>R</original>
    <variation>I</variation>
    <variation>K</variation>
    <location>
        <position position="70"/>
    </location>
</feature>
<feature type="mutagenesis site" description="No change in desulfination activity." evidence="2">
    <original>E</original>
    <variation>Q</variation>
    <location>
        <position position="192"/>
    </location>
</feature>
<feature type="strand" evidence="22">
    <location>
        <begin position="21"/>
        <end position="26"/>
    </location>
</feature>
<feature type="helix" evidence="22">
    <location>
        <begin position="32"/>
        <end position="38"/>
    </location>
</feature>
<feature type="helix" evidence="22">
    <location>
        <begin position="41"/>
        <end position="44"/>
    </location>
</feature>
<feature type="strand" evidence="22">
    <location>
        <begin position="48"/>
        <end position="51"/>
    </location>
</feature>
<feature type="helix" evidence="22">
    <location>
        <begin position="54"/>
        <end position="58"/>
    </location>
</feature>
<feature type="helix" evidence="22">
    <location>
        <begin position="59"/>
        <end position="62"/>
    </location>
</feature>
<feature type="strand" evidence="22">
    <location>
        <begin position="68"/>
        <end position="72"/>
    </location>
</feature>
<feature type="helix" evidence="22">
    <location>
        <begin position="75"/>
        <end position="82"/>
    </location>
</feature>
<feature type="strand" evidence="22">
    <location>
        <begin position="88"/>
        <end position="97"/>
    </location>
</feature>
<feature type="strand" evidence="22">
    <location>
        <begin position="100"/>
        <end position="106"/>
    </location>
</feature>
<feature type="helix" evidence="22">
    <location>
        <begin position="114"/>
        <end position="117"/>
    </location>
</feature>
<feature type="strand" evidence="22">
    <location>
        <begin position="121"/>
        <end position="124"/>
    </location>
</feature>
<feature type="helix" evidence="22">
    <location>
        <begin position="126"/>
        <end position="133"/>
    </location>
</feature>
<feature type="helix" evidence="22">
    <location>
        <begin position="139"/>
        <end position="141"/>
    </location>
</feature>
<feature type="helix" evidence="22">
    <location>
        <begin position="144"/>
        <end position="151"/>
    </location>
</feature>
<feature type="helix" evidence="22">
    <location>
        <begin position="154"/>
        <end position="166"/>
    </location>
</feature>
<feature type="helix" evidence="22">
    <location>
        <begin position="171"/>
        <end position="173"/>
    </location>
</feature>
<feature type="strand" evidence="22">
    <location>
        <begin position="174"/>
        <end position="178"/>
    </location>
</feature>
<feature type="turn" evidence="22">
    <location>
        <begin position="182"/>
        <end position="184"/>
    </location>
</feature>
<feature type="helix" evidence="22">
    <location>
        <begin position="188"/>
        <end position="193"/>
    </location>
</feature>
<feature type="strand" evidence="22">
    <location>
        <begin position="194"/>
        <end position="198"/>
    </location>
</feature>
<feature type="helix" evidence="22">
    <location>
        <begin position="199"/>
        <end position="202"/>
    </location>
</feature>
<feature type="helix" evidence="22">
    <location>
        <begin position="206"/>
        <end position="215"/>
    </location>
</feature>
<feature type="strand" evidence="22">
    <location>
        <begin position="216"/>
        <end position="218"/>
    </location>
</feature>
<feature type="strand" evidence="22">
    <location>
        <begin position="220"/>
        <end position="225"/>
    </location>
</feature>
<feature type="helix" evidence="22">
    <location>
        <begin position="226"/>
        <end position="234"/>
    </location>
</feature>
<feature type="strand" evidence="22">
    <location>
        <begin position="237"/>
        <end position="241"/>
    </location>
</feature>
<feature type="helix" evidence="22">
    <location>
        <begin position="243"/>
        <end position="245"/>
    </location>
</feature>
<feature type="helix" evidence="22">
    <location>
        <begin position="247"/>
        <end position="249"/>
    </location>
</feature>
<feature type="strand" evidence="22">
    <location>
        <begin position="251"/>
        <end position="258"/>
    </location>
</feature>
<feature type="helix" evidence="22">
    <location>
        <begin position="259"/>
        <end position="264"/>
    </location>
</feature>
<feature type="helix" evidence="22">
    <location>
        <begin position="266"/>
        <end position="283"/>
    </location>
</feature>
<feature type="helix" evidence="22">
    <location>
        <begin position="287"/>
        <end position="298"/>
    </location>
</feature>
<feature type="helix" evidence="22">
    <location>
        <begin position="302"/>
        <end position="309"/>
    </location>
</feature>
<feature type="helix" evidence="22">
    <location>
        <begin position="313"/>
        <end position="315"/>
    </location>
</feature>
<feature type="helix" evidence="22">
    <location>
        <begin position="323"/>
        <end position="338"/>
    </location>
</feature>
<feature type="helix" evidence="22">
    <location>
        <begin position="348"/>
        <end position="351"/>
    </location>
</feature>
<feature type="helix" evidence="22">
    <location>
        <begin position="355"/>
        <end position="361"/>
    </location>
</feature>
<accession>P54997</accession>
<organism>
    <name type="scientific">Rhodococcus qingshengii</name>
    <dbReference type="NCBI Taxonomy" id="334542"/>
    <lineage>
        <taxon>Bacteria</taxon>
        <taxon>Bacillati</taxon>
        <taxon>Actinomycetota</taxon>
        <taxon>Actinomycetes</taxon>
        <taxon>Mycobacteriales</taxon>
        <taxon>Nocardiaceae</taxon>
        <taxon>Rhodococcus</taxon>
        <taxon>Rhodococcus erythropolis group</taxon>
    </lineage>
</organism>
<geneLocation type="plasmid">
    <name>pSox</name>
</geneLocation>
<evidence type="ECO:0000269" key="1">
    <source>
    </source>
</evidence>
<evidence type="ECO:0000269" key="2">
    <source>
    </source>
</evidence>
<evidence type="ECO:0000269" key="3">
    <source>
    </source>
</evidence>
<evidence type="ECO:0000269" key="4">
    <source>
    </source>
</evidence>
<evidence type="ECO:0000269" key="5">
    <source>
    </source>
</evidence>
<evidence type="ECO:0000269" key="6">
    <source>
    </source>
</evidence>
<evidence type="ECO:0000269" key="7">
    <source>
    </source>
</evidence>
<evidence type="ECO:0000269" key="8">
    <source>
    </source>
</evidence>
<evidence type="ECO:0000303" key="9">
    <source>
    </source>
</evidence>
<evidence type="ECO:0000303" key="10">
    <source>
    </source>
</evidence>
<evidence type="ECO:0000303" key="11">
    <source>
    </source>
</evidence>
<evidence type="ECO:0000303" key="12">
    <source>
    </source>
</evidence>
<evidence type="ECO:0000305" key="13"/>
<evidence type="ECO:0000305" key="14">
    <source>
    </source>
</evidence>
<evidence type="ECO:0000305" key="15">
    <source>
    </source>
</evidence>
<evidence type="ECO:0000305" key="16">
    <source>
    </source>
</evidence>
<evidence type="ECO:0000305" key="17">
    <source>
    </source>
</evidence>
<evidence type="ECO:0000305" key="18">
    <source>
    </source>
</evidence>
<evidence type="ECO:0007744" key="19">
    <source>
        <dbReference type="PDB" id="2DE2"/>
    </source>
</evidence>
<evidence type="ECO:0007744" key="20">
    <source>
        <dbReference type="PDB" id="2DE3"/>
    </source>
</evidence>
<evidence type="ECO:0007744" key="21">
    <source>
        <dbReference type="PDB" id="2DE4"/>
    </source>
</evidence>
<evidence type="ECO:0007829" key="22">
    <source>
        <dbReference type="PDB" id="2DE3"/>
    </source>
</evidence>
<dbReference type="EC" id="3.13.1.3" evidence="8"/>
<dbReference type="EMBL" id="U08850">
    <property type="protein sequence ID" value="AAA56672.1"/>
    <property type="molecule type" value="Genomic_DNA"/>
</dbReference>
<dbReference type="EMBL" id="L37363">
    <property type="protein sequence ID" value="AAA99483.1"/>
    <property type="molecule type" value="Genomic_DNA"/>
</dbReference>
<dbReference type="RefSeq" id="WP_019750079.1">
    <property type="nucleotide sequence ID" value="NZ_JAGWDW010000001.1"/>
</dbReference>
<dbReference type="PDB" id="2DE2">
    <property type="method" value="X-ray"/>
    <property type="resolution" value="1.80 A"/>
    <property type="chains" value="A=1-365"/>
</dbReference>
<dbReference type="PDB" id="2DE3">
    <property type="method" value="X-ray"/>
    <property type="resolution" value="1.60 A"/>
    <property type="chains" value="A/B=1-365"/>
</dbReference>
<dbReference type="PDB" id="2DE4">
    <property type="method" value="X-ray"/>
    <property type="resolution" value="1.80 A"/>
    <property type="chains" value="A/B=1-365"/>
</dbReference>
<dbReference type="PDBsum" id="2DE2"/>
<dbReference type="PDBsum" id="2DE3"/>
<dbReference type="PDBsum" id="2DE4"/>
<dbReference type="SMR" id="P54997"/>
<dbReference type="DrugBank" id="DB07483">
    <property type="generic name" value="1,1'-BIPHENYL-2-SULFINIC ACID"/>
</dbReference>
<dbReference type="DrugBank" id="DB08319">
    <property type="generic name" value="2'-HYDROXY-1,1'-BIPHENYL-2-SULFINIC ACID"/>
</dbReference>
<dbReference type="KEGG" id="ag:AAA99483"/>
<dbReference type="BioCyc" id="MetaCyc:MONOMER-266"/>
<dbReference type="BRENDA" id="3.13.1.3">
    <property type="organism ID" value="5389"/>
</dbReference>
<dbReference type="UniPathway" id="UPA00346"/>
<dbReference type="EvolutionaryTrace" id="P54997"/>
<dbReference type="GO" id="GO:0005737">
    <property type="term" value="C:cytoplasm"/>
    <property type="evidence" value="ECO:0007669"/>
    <property type="project" value="UniProtKB-SubCell"/>
</dbReference>
<dbReference type="GO" id="GO:0018740">
    <property type="term" value="F:2'-hydroxybiphenyl-2-sulfinate desulfinase activity"/>
    <property type="evidence" value="ECO:0007669"/>
    <property type="project" value="UniProtKB-EC"/>
</dbReference>
<dbReference type="GO" id="GO:0004497">
    <property type="term" value="F:monooxygenase activity"/>
    <property type="evidence" value="ECO:0007669"/>
    <property type="project" value="UniProtKB-KW"/>
</dbReference>
<dbReference type="GO" id="GO:0018896">
    <property type="term" value="P:dibenzothiophene catabolic process"/>
    <property type="evidence" value="ECO:0007669"/>
    <property type="project" value="UniProtKB-UniPathway"/>
</dbReference>
<dbReference type="CDD" id="cd13554">
    <property type="entry name" value="PBP2_DszB"/>
    <property type="match status" value="1"/>
</dbReference>
<dbReference type="Gene3D" id="3.40.190.270">
    <property type="match status" value="1"/>
</dbReference>
<dbReference type="Gene3D" id="3.40.190.10">
    <property type="entry name" value="Periplasmic binding protein-like II"/>
    <property type="match status" value="1"/>
</dbReference>
<dbReference type="SUPFAM" id="SSF53850">
    <property type="entry name" value="Periplasmic binding protein-like II"/>
    <property type="match status" value="1"/>
</dbReference>